<comment type="cofactor">
    <cofactor evidence="1">
        <name>Zn(2+)</name>
        <dbReference type="ChEBI" id="CHEBI:29105"/>
    </cofactor>
    <text evidence="1">Binds 1 zinc ion per subunit.</text>
</comment>
<comment type="similarity">
    <text evidence="1">Belongs to the eukaryotic ribosomal protein eL43 family.</text>
</comment>
<dbReference type="EMBL" id="CP000504">
    <property type="protein sequence ID" value="ABL88010.1"/>
    <property type="molecule type" value="Genomic_DNA"/>
</dbReference>
<dbReference type="RefSeq" id="WP_011762586.1">
    <property type="nucleotide sequence ID" value="NC_008701.1"/>
</dbReference>
<dbReference type="SMR" id="A1RSS8"/>
<dbReference type="STRING" id="384616.Pisl_0834"/>
<dbReference type="GeneID" id="4617340"/>
<dbReference type="KEGG" id="pis:Pisl_0834"/>
<dbReference type="eggNOG" id="arCOG04208">
    <property type="taxonomic scope" value="Archaea"/>
</dbReference>
<dbReference type="HOGENOM" id="CLU_141199_2_0_2"/>
<dbReference type="OrthoDB" id="372011at2157"/>
<dbReference type="Proteomes" id="UP000002595">
    <property type="component" value="Chromosome"/>
</dbReference>
<dbReference type="GO" id="GO:1990904">
    <property type="term" value="C:ribonucleoprotein complex"/>
    <property type="evidence" value="ECO:0007669"/>
    <property type="project" value="UniProtKB-KW"/>
</dbReference>
<dbReference type="GO" id="GO:0005840">
    <property type="term" value="C:ribosome"/>
    <property type="evidence" value="ECO:0007669"/>
    <property type="project" value="UniProtKB-KW"/>
</dbReference>
<dbReference type="GO" id="GO:0070180">
    <property type="term" value="F:large ribosomal subunit rRNA binding"/>
    <property type="evidence" value="ECO:0007669"/>
    <property type="project" value="UniProtKB-UniRule"/>
</dbReference>
<dbReference type="GO" id="GO:0003735">
    <property type="term" value="F:structural constituent of ribosome"/>
    <property type="evidence" value="ECO:0007669"/>
    <property type="project" value="InterPro"/>
</dbReference>
<dbReference type="GO" id="GO:0008270">
    <property type="term" value="F:zinc ion binding"/>
    <property type="evidence" value="ECO:0007669"/>
    <property type="project" value="UniProtKB-UniRule"/>
</dbReference>
<dbReference type="GO" id="GO:0006412">
    <property type="term" value="P:translation"/>
    <property type="evidence" value="ECO:0007669"/>
    <property type="project" value="UniProtKB-UniRule"/>
</dbReference>
<dbReference type="Gene3D" id="2.20.25.30">
    <property type="match status" value="1"/>
</dbReference>
<dbReference type="HAMAP" id="MF_00327">
    <property type="entry name" value="Ribosomal_eL43"/>
    <property type="match status" value="1"/>
</dbReference>
<dbReference type="InterPro" id="IPR011331">
    <property type="entry name" value="Ribosomal_eL37/eL43"/>
</dbReference>
<dbReference type="InterPro" id="IPR002674">
    <property type="entry name" value="Ribosomal_eL43"/>
</dbReference>
<dbReference type="InterPro" id="IPR050522">
    <property type="entry name" value="Ribosomal_protein_eL43"/>
</dbReference>
<dbReference type="InterPro" id="IPR011332">
    <property type="entry name" value="Ribosomal_zn-bd"/>
</dbReference>
<dbReference type="NCBIfam" id="NF003058">
    <property type="entry name" value="PRK03976.1"/>
    <property type="match status" value="1"/>
</dbReference>
<dbReference type="PANTHER" id="PTHR48129">
    <property type="entry name" value="60S RIBOSOMAL PROTEIN L37A"/>
    <property type="match status" value="1"/>
</dbReference>
<dbReference type="PANTHER" id="PTHR48129:SF1">
    <property type="entry name" value="LARGE RIBOSOMAL SUBUNIT PROTEIN EL43"/>
    <property type="match status" value="1"/>
</dbReference>
<dbReference type="Pfam" id="PF01780">
    <property type="entry name" value="Ribosomal_L37ae"/>
    <property type="match status" value="1"/>
</dbReference>
<dbReference type="SUPFAM" id="SSF57829">
    <property type="entry name" value="Zn-binding ribosomal proteins"/>
    <property type="match status" value="1"/>
</dbReference>
<accession>A1RSS8</accession>
<gene>
    <name evidence="1" type="primary">rpl37ae</name>
    <name type="ordered locus">Pisl_0834</name>
</gene>
<evidence type="ECO:0000255" key="1">
    <source>
        <dbReference type="HAMAP-Rule" id="MF_00327"/>
    </source>
</evidence>
<evidence type="ECO:0000305" key="2"/>
<protein>
    <recommendedName>
        <fullName evidence="1">Large ribosomal subunit protein eL43</fullName>
    </recommendedName>
    <alternativeName>
        <fullName evidence="2">50S ribosomal protein L37Ae</fullName>
    </alternativeName>
    <alternativeName>
        <fullName evidence="1">Ribosomal protein L43e</fullName>
    </alternativeName>
</protein>
<name>RL37A_PYRIL</name>
<organism>
    <name type="scientific">Pyrobaculum islandicum (strain DSM 4184 / JCM 9189 / GEO3)</name>
    <dbReference type="NCBI Taxonomy" id="384616"/>
    <lineage>
        <taxon>Archaea</taxon>
        <taxon>Thermoproteota</taxon>
        <taxon>Thermoprotei</taxon>
        <taxon>Thermoproteales</taxon>
        <taxon>Thermoproteaceae</taxon>
        <taxon>Pyrobaculum</taxon>
    </lineage>
</organism>
<feature type="chain" id="PRO_1000005041" description="Large ribosomal subunit protein eL43">
    <location>
        <begin position="1"/>
        <end position="101"/>
    </location>
</feature>
<feature type="zinc finger region" description="C4-type" evidence="1">
    <location>
        <begin position="40"/>
        <end position="62"/>
    </location>
</feature>
<sequence>MPFSHTKIVGPAGRYGARYGMGLRRKITAIEIKQRGKHRCPSCRSLVRLKRLAFGIWQCPKCGFTFAGGAWVPQTVMGKTLTPEELKEVEIQKARWRETGK</sequence>
<keyword id="KW-0479">Metal-binding</keyword>
<keyword id="KW-0687">Ribonucleoprotein</keyword>
<keyword id="KW-0689">Ribosomal protein</keyword>
<keyword id="KW-0694">RNA-binding</keyword>
<keyword id="KW-0862">Zinc</keyword>
<keyword id="KW-0863">Zinc-finger</keyword>
<proteinExistence type="inferred from homology"/>
<reference key="1">
    <citation type="submission" date="2006-12" db="EMBL/GenBank/DDBJ databases">
        <title>Complete sequence of Pyrobaculum islandicum DSM 4184.</title>
        <authorList>
            <person name="Copeland A."/>
            <person name="Lucas S."/>
            <person name="Lapidus A."/>
            <person name="Barry K."/>
            <person name="Detter J.C."/>
            <person name="Glavina del Rio T."/>
            <person name="Dalin E."/>
            <person name="Tice H."/>
            <person name="Pitluck S."/>
            <person name="Meincke L."/>
            <person name="Brettin T."/>
            <person name="Bruce D."/>
            <person name="Han C."/>
            <person name="Tapia R."/>
            <person name="Gilna P."/>
            <person name="Schmutz J."/>
            <person name="Larimer F."/>
            <person name="Land M."/>
            <person name="Hauser L."/>
            <person name="Kyrpides N."/>
            <person name="Mikhailova N."/>
            <person name="Cozen A.E."/>
            <person name="Fitz-Gibbon S.T."/>
            <person name="House C.H."/>
            <person name="Saltikov C."/>
            <person name="Lowe T."/>
            <person name="Richardson P."/>
        </authorList>
    </citation>
    <scope>NUCLEOTIDE SEQUENCE [LARGE SCALE GENOMIC DNA]</scope>
    <source>
        <strain>DSM 4184 / JCM 9189 / GEO3</strain>
    </source>
</reference>